<sequence>MAAPGEALTPSGYITHHLTNLSTYKLGLVAEESSFWNVHIDSLFFSWFTGLIFLGIFYAVARKTTAGVPGKLQCAVEMIVEFVATNVKDTFHGRNPLIAPLALTIFCWVFLMNLMDLVPIDFLPYPAEHWLGIPYLKVVPSADVNITMAMALGVFALMIYYSIKVKGLGGFARELALHPFNHWTMIPFNLLIEVVSLLAKPLSLGMRLFGNMFAGEVVFILCAAMLPWYLQWMGSLPWAIFHILVILIQAFVFMMLTIVYMSMAHEDSDH</sequence>
<dbReference type="EMBL" id="BA000037">
    <property type="protein sequence ID" value="BAC96021.1"/>
    <property type="molecule type" value="Genomic_DNA"/>
</dbReference>
<dbReference type="RefSeq" id="WP_011079049.1">
    <property type="nucleotide sequence ID" value="NC_005139.1"/>
</dbReference>
<dbReference type="SMR" id="Q7MGH4"/>
<dbReference type="STRING" id="672.VV93_v1c29790"/>
<dbReference type="GeneID" id="93895304"/>
<dbReference type="KEGG" id="vvy:VV3257"/>
<dbReference type="eggNOG" id="COG0356">
    <property type="taxonomic scope" value="Bacteria"/>
</dbReference>
<dbReference type="HOGENOM" id="CLU_041018_1_0_6"/>
<dbReference type="Proteomes" id="UP000002675">
    <property type="component" value="Chromosome I"/>
</dbReference>
<dbReference type="GO" id="GO:0005886">
    <property type="term" value="C:plasma membrane"/>
    <property type="evidence" value="ECO:0007669"/>
    <property type="project" value="UniProtKB-SubCell"/>
</dbReference>
<dbReference type="GO" id="GO:0045259">
    <property type="term" value="C:proton-transporting ATP synthase complex"/>
    <property type="evidence" value="ECO:0007669"/>
    <property type="project" value="UniProtKB-KW"/>
</dbReference>
<dbReference type="GO" id="GO:0046933">
    <property type="term" value="F:proton-transporting ATP synthase activity, rotational mechanism"/>
    <property type="evidence" value="ECO:0007669"/>
    <property type="project" value="UniProtKB-UniRule"/>
</dbReference>
<dbReference type="GO" id="GO:0042777">
    <property type="term" value="P:proton motive force-driven plasma membrane ATP synthesis"/>
    <property type="evidence" value="ECO:0007669"/>
    <property type="project" value="TreeGrafter"/>
</dbReference>
<dbReference type="CDD" id="cd00310">
    <property type="entry name" value="ATP-synt_Fo_a_6"/>
    <property type="match status" value="1"/>
</dbReference>
<dbReference type="FunFam" id="1.20.120.220:FF:000002">
    <property type="entry name" value="ATP synthase subunit a"/>
    <property type="match status" value="1"/>
</dbReference>
<dbReference type="Gene3D" id="1.20.120.220">
    <property type="entry name" value="ATP synthase, F0 complex, subunit A"/>
    <property type="match status" value="1"/>
</dbReference>
<dbReference type="HAMAP" id="MF_01393">
    <property type="entry name" value="ATP_synth_a_bact"/>
    <property type="match status" value="1"/>
</dbReference>
<dbReference type="InterPro" id="IPR045082">
    <property type="entry name" value="ATP_syn_F0_a_bact/chloroplast"/>
</dbReference>
<dbReference type="InterPro" id="IPR000568">
    <property type="entry name" value="ATP_synth_F0_asu"/>
</dbReference>
<dbReference type="InterPro" id="IPR023011">
    <property type="entry name" value="ATP_synth_F0_asu_AS"/>
</dbReference>
<dbReference type="InterPro" id="IPR035908">
    <property type="entry name" value="F0_ATP_A_sf"/>
</dbReference>
<dbReference type="NCBIfam" id="TIGR01131">
    <property type="entry name" value="ATP_synt_6_or_A"/>
    <property type="match status" value="1"/>
</dbReference>
<dbReference type="NCBIfam" id="NF004477">
    <property type="entry name" value="PRK05815.1-1"/>
    <property type="match status" value="1"/>
</dbReference>
<dbReference type="PANTHER" id="PTHR42823">
    <property type="entry name" value="ATP SYNTHASE SUBUNIT A, CHLOROPLASTIC"/>
    <property type="match status" value="1"/>
</dbReference>
<dbReference type="PANTHER" id="PTHR42823:SF3">
    <property type="entry name" value="ATP SYNTHASE SUBUNIT A, CHLOROPLASTIC"/>
    <property type="match status" value="1"/>
</dbReference>
<dbReference type="Pfam" id="PF00119">
    <property type="entry name" value="ATP-synt_A"/>
    <property type="match status" value="1"/>
</dbReference>
<dbReference type="PRINTS" id="PR00123">
    <property type="entry name" value="ATPASEA"/>
</dbReference>
<dbReference type="SUPFAM" id="SSF81336">
    <property type="entry name" value="F1F0 ATP synthase subunit A"/>
    <property type="match status" value="1"/>
</dbReference>
<dbReference type="PROSITE" id="PS00449">
    <property type="entry name" value="ATPASE_A"/>
    <property type="match status" value="1"/>
</dbReference>
<gene>
    <name evidence="1" type="primary">atpB</name>
    <name type="ordered locus">VV3257</name>
</gene>
<evidence type="ECO:0000255" key="1">
    <source>
        <dbReference type="HAMAP-Rule" id="MF_01393"/>
    </source>
</evidence>
<comment type="function">
    <text evidence="1">Key component of the proton channel; it plays a direct role in the translocation of protons across the membrane.</text>
</comment>
<comment type="subunit">
    <text evidence="1">F-type ATPases have 2 components, CF(1) - the catalytic core - and CF(0) - the membrane proton channel. CF(1) has five subunits: alpha(3), beta(3), gamma(1), delta(1), epsilon(1). CF(0) has three main subunits: a(1), b(2) and c(9-12). The alpha and beta chains form an alternating ring which encloses part of the gamma chain. CF(1) is attached to CF(0) by a central stalk formed by the gamma and epsilon chains, while a peripheral stalk is formed by the delta and b chains.</text>
</comment>
<comment type="subcellular location">
    <subcellularLocation>
        <location evidence="1">Cell inner membrane</location>
        <topology evidence="1">Multi-pass membrane protein</topology>
    </subcellularLocation>
</comment>
<comment type="similarity">
    <text evidence="1">Belongs to the ATPase A chain family.</text>
</comment>
<feature type="chain" id="PRO_0000362505" description="ATP synthase subunit a">
    <location>
        <begin position="1"/>
        <end position="270"/>
    </location>
</feature>
<feature type="transmembrane region" description="Helical" evidence="1">
    <location>
        <begin position="40"/>
        <end position="60"/>
    </location>
</feature>
<feature type="transmembrane region" description="Helical" evidence="1">
    <location>
        <begin position="98"/>
        <end position="118"/>
    </location>
</feature>
<feature type="transmembrane region" description="Helical" evidence="1">
    <location>
        <begin position="143"/>
        <end position="163"/>
    </location>
</feature>
<feature type="transmembrane region" description="Helical" evidence="1">
    <location>
        <begin position="208"/>
        <end position="228"/>
    </location>
</feature>
<feature type="transmembrane region" description="Helical" evidence="1">
    <location>
        <begin position="239"/>
        <end position="259"/>
    </location>
</feature>
<keyword id="KW-0066">ATP synthesis</keyword>
<keyword id="KW-0997">Cell inner membrane</keyword>
<keyword id="KW-1003">Cell membrane</keyword>
<keyword id="KW-0138">CF(0)</keyword>
<keyword id="KW-0375">Hydrogen ion transport</keyword>
<keyword id="KW-0406">Ion transport</keyword>
<keyword id="KW-0472">Membrane</keyword>
<keyword id="KW-0812">Transmembrane</keyword>
<keyword id="KW-1133">Transmembrane helix</keyword>
<keyword id="KW-0813">Transport</keyword>
<reference key="1">
    <citation type="journal article" date="2003" name="Genome Res.">
        <title>Comparative genome analysis of Vibrio vulnificus, a marine pathogen.</title>
        <authorList>
            <person name="Chen C.-Y."/>
            <person name="Wu K.-M."/>
            <person name="Chang Y.-C."/>
            <person name="Chang C.-H."/>
            <person name="Tsai H.-C."/>
            <person name="Liao T.-L."/>
            <person name="Liu Y.-M."/>
            <person name="Chen H.-J."/>
            <person name="Shen A.B.-T."/>
            <person name="Li J.-C."/>
            <person name="Su T.-L."/>
            <person name="Shao C.-P."/>
            <person name="Lee C.-T."/>
            <person name="Hor L.-I."/>
            <person name="Tsai S.-F."/>
        </authorList>
    </citation>
    <scope>NUCLEOTIDE SEQUENCE [LARGE SCALE GENOMIC DNA]</scope>
    <source>
        <strain>YJ016</strain>
    </source>
</reference>
<accession>Q7MGH4</accession>
<proteinExistence type="inferred from homology"/>
<protein>
    <recommendedName>
        <fullName evidence="1">ATP synthase subunit a</fullName>
    </recommendedName>
    <alternativeName>
        <fullName evidence="1">ATP synthase F0 sector subunit a</fullName>
    </alternativeName>
    <alternativeName>
        <fullName evidence="1">F-ATPase subunit 6</fullName>
    </alternativeName>
</protein>
<name>ATP6_VIBVY</name>
<organism>
    <name type="scientific">Vibrio vulnificus (strain YJ016)</name>
    <dbReference type="NCBI Taxonomy" id="196600"/>
    <lineage>
        <taxon>Bacteria</taxon>
        <taxon>Pseudomonadati</taxon>
        <taxon>Pseudomonadota</taxon>
        <taxon>Gammaproteobacteria</taxon>
        <taxon>Vibrionales</taxon>
        <taxon>Vibrionaceae</taxon>
        <taxon>Vibrio</taxon>
    </lineage>
</organism>